<accession>Q9ULV4</accession>
<accession>A7MAP0</accession>
<accession>A7MAP1</accession>
<accession>B3KU12</accession>
<accession>Q9NSK5</accession>
<keyword id="KW-0002">3D-structure</keyword>
<keyword id="KW-0007">Acetylation</keyword>
<keyword id="KW-0009">Actin-binding</keyword>
<keyword id="KW-0025">Alternative splicing</keyword>
<keyword id="KW-1003">Cell membrane</keyword>
<keyword id="KW-0966">Cell projection</keyword>
<keyword id="KW-0175">Coiled coil</keyword>
<keyword id="KW-0963">Cytoplasm</keyword>
<keyword id="KW-0206">Cytoskeleton</keyword>
<keyword id="KW-0967">Endosome</keyword>
<keyword id="KW-0472">Membrane</keyword>
<keyword id="KW-1267">Proteomics identification</keyword>
<keyword id="KW-1185">Reference proteome</keyword>
<keyword id="KW-0677">Repeat</keyword>
<keyword id="KW-0770">Synapse</keyword>
<keyword id="KW-0853">WD repeat</keyword>
<gene>
    <name evidence="11 15" type="primary">CORO1C</name>
    <name evidence="13" type="synonym">CRN2</name>
    <name type="synonym">CRNN4</name>
</gene>
<evidence type="ECO:0000250" key="1">
    <source>
        <dbReference type="UniProtKB" id="Q9WUM4"/>
    </source>
</evidence>
<evidence type="ECO:0000255" key="2">
    <source>
        <dbReference type="PROSITE-ProRule" id="PRU00221"/>
    </source>
</evidence>
<evidence type="ECO:0000269" key="3">
    <source>
    </source>
</evidence>
<evidence type="ECO:0000269" key="4">
    <source>
    </source>
</evidence>
<evidence type="ECO:0000269" key="5">
    <source>
    </source>
</evidence>
<evidence type="ECO:0000269" key="6">
    <source>
    </source>
</evidence>
<evidence type="ECO:0000269" key="7">
    <source>
    </source>
</evidence>
<evidence type="ECO:0000269" key="8">
    <source>
    </source>
</evidence>
<evidence type="ECO:0000269" key="9">
    <source>
    </source>
</evidence>
<evidence type="ECO:0000269" key="10">
    <source>
    </source>
</evidence>
<evidence type="ECO:0000303" key="11">
    <source>
    </source>
</evidence>
<evidence type="ECO:0000303" key="12">
    <source>
    </source>
</evidence>
<evidence type="ECO:0000303" key="13">
    <source>
    </source>
</evidence>
<evidence type="ECO:0000305" key="14"/>
<evidence type="ECO:0000312" key="15">
    <source>
        <dbReference type="HGNC" id="HGNC:2254"/>
    </source>
</evidence>
<evidence type="ECO:0007744" key="16">
    <source>
    </source>
</evidence>
<evidence type="ECO:0007829" key="17">
    <source>
        <dbReference type="PDB" id="7STY"/>
    </source>
</evidence>
<reference key="1">
    <citation type="journal article" date="2000" name="Cytogenet. Cell Genet.">
        <title>Isolation and chromosomal assignment of a novel human gene, CORO1C, homologous to coronin-like actin-binding proteins.</title>
        <authorList>
            <person name="Iizaka M."/>
            <person name="Han H.-J."/>
            <person name="Akashi H."/>
            <person name="Furukawa Y."/>
            <person name="Nakajima Y."/>
            <person name="Sugano S."/>
            <person name="Ogawa M."/>
            <person name="Nakamura Y."/>
        </authorList>
    </citation>
    <scope>NUCLEOTIDE SEQUENCE [MRNA] (ISOFORM 1)</scope>
    <scope>TISSUE SPECIFICITY</scope>
    <scope>SUBCELLULAR LOCATION</scope>
</reference>
<reference key="2">
    <citation type="journal article" date="2009" name="J. Mol. Biol.">
        <title>Structural and functional diversity of novel coronin 1C (CRN2) isoforms in muscle.</title>
        <authorList>
            <person name="Xavier C.P."/>
            <person name="Rastetter R.H."/>
            <person name="Stumpf M."/>
            <person name="Rosentreter A."/>
            <person name="Muller R."/>
            <person name="Reimann J."/>
            <person name="Cornfine S."/>
            <person name="Linder S."/>
            <person name="van Vliet V."/>
            <person name="Hofmann A."/>
            <person name="Morgan R.O."/>
            <person name="Fernandez M.P."/>
            <person name="Schroder R."/>
            <person name="Noegel A.A."/>
            <person name="Clemen C.S."/>
        </authorList>
    </citation>
    <scope>NUCLEOTIDE SEQUENCE [MRNA] (ISOFORMS 2 AND 3)</scope>
    <scope>FUNCTION (ISOFORM 3)</scope>
    <scope>ALTERNATIVE SPLICING</scope>
    <scope>SUBUNIT</scope>
    <scope>SUBCELLULAR LOCATION</scope>
</reference>
<reference key="3">
    <citation type="journal article" date="2004" name="Nat. Genet.">
        <title>Complete sequencing and characterization of 21,243 full-length human cDNAs.</title>
        <authorList>
            <person name="Ota T."/>
            <person name="Suzuki Y."/>
            <person name="Nishikawa T."/>
            <person name="Otsuki T."/>
            <person name="Sugiyama T."/>
            <person name="Irie R."/>
            <person name="Wakamatsu A."/>
            <person name="Hayashi K."/>
            <person name="Sato H."/>
            <person name="Nagai K."/>
            <person name="Kimura K."/>
            <person name="Makita H."/>
            <person name="Sekine M."/>
            <person name="Obayashi M."/>
            <person name="Nishi T."/>
            <person name="Shibahara T."/>
            <person name="Tanaka T."/>
            <person name="Ishii S."/>
            <person name="Yamamoto J."/>
            <person name="Saito K."/>
            <person name="Kawai Y."/>
            <person name="Isono Y."/>
            <person name="Nakamura Y."/>
            <person name="Nagahari K."/>
            <person name="Murakami K."/>
            <person name="Yasuda T."/>
            <person name="Iwayanagi T."/>
            <person name="Wagatsuma M."/>
            <person name="Shiratori A."/>
            <person name="Sudo H."/>
            <person name="Hosoiri T."/>
            <person name="Kaku Y."/>
            <person name="Kodaira H."/>
            <person name="Kondo H."/>
            <person name="Sugawara M."/>
            <person name="Takahashi M."/>
            <person name="Kanda K."/>
            <person name="Yokoi T."/>
            <person name="Furuya T."/>
            <person name="Kikkawa E."/>
            <person name="Omura Y."/>
            <person name="Abe K."/>
            <person name="Kamihara K."/>
            <person name="Katsuta N."/>
            <person name="Sato K."/>
            <person name="Tanikawa M."/>
            <person name="Yamazaki M."/>
            <person name="Ninomiya K."/>
            <person name="Ishibashi T."/>
            <person name="Yamashita H."/>
            <person name="Murakawa K."/>
            <person name="Fujimori K."/>
            <person name="Tanai H."/>
            <person name="Kimata M."/>
            <person name="Watanabe M."/>
            <person name="Hiraoka S."/>
            <person name="Chiba Y."/>
            <person name="Ishida S."/>
            <person name="Ono Y."/>
            <person name="Takiguchi S."/>
            <person name="Watanabe S."/>
            <person name="Yosida M."/>
            <person name="Hotuta T."/>
            <person name="Kusano J."/>
            <person name="Kanehori K."/>
            <person name="Takahashi-Fujii A."/>
            <person name="Hara H."/>
            <person name="Tanase T.-O."/>
            <person name="Nomura Y."/>
            <person name="Togiya S."/>
            <person name="Komai F."/>
            <person name="Hara R."/>
            <person name="Takeuchi K."/>
            <person name="Arita M."/>
            <person name="Imose N."/>
            <person name="Musashino K."/>
            <person name="Yuuki H."/>
            <person name="Oshima A."/>
            <person name="Sasaki N."/>
            <person name="Aotsuka S."/>
            <person name="Yoshikawa Y."/>
            <person name="Matsunawa H."/>
            <person name="Ichihara T."/>
            <person name="Shiohata N."/>
            <person name="Sano S."/>
            <person name="Moriya S."/>
            <person name="Momiyama H."/>
            <person name="Satoh N."/>
            <person name="Takami S."/>
            <person name="Terashima Y."/>
            <person name="Suzuki O."/>
            <person name="Nakagawa S."/>
            <person name="Senoh A."/>
            <person name="Mizoguchi H."/>
            <person name="Goto Y."/>
            <person name="Shimizu F."/>
            <person name="Wakebe H."/>
            <person name="Hishigaki H."/>
            <person name="Watanabe T."/>
            <person name="Sugiyama A."/>
            <person name="Takemoto M."/>
            <person name="Kawakami B."/>
            <person name="Yamazaki M."/>
            <person name="Watanabe K."/>
            <person name="Kumagai A."/>
            <person name="Itakura S."/>
            <person name="Fukuzumi Y."/>
            <person name="Fujimori Y."/>
            <person name="Komiyama M."/>
            <person name="Tashiro H."/>
            <person name="Tanigami A."/>
            <person name="Fujiwara T."/>
            <person name="Ono T."/>
            <person name="Yamada K."/>
            <person name="Fujii Y."/>
            <person name="Ozaki K."/>
            <person name="Hirao M."/>
            <person name="Ohmori Y."/>
            <person name="Kawabata A."/>
            <person name="Hikiji T."/>
            <person name="Kobatake N."/>
            <person name="Inagaki H."/>
            <person name="Ikema Y."/>
            <person name="Okamoto S."/>
            <person name="Okitani R."/>
            <person name="Kawakami T."/>
            <person name="Noguchi S."/>
            <person name="Itoh T."/>
            <person name="Shigeta K."/>
            <person name="Senba T."/>
            <person name="Matsumura K."/>
            <person name="Nakajima Y."/>
            <person name="Mizuno T."/>
            <person name="Morinaga M."/>
            <person name="Sasaki M."/>
            <person name="Togashi T."/>
            <person name="Oyama M."/>
            <person name="Hata H."/>
            <person name="Watanabe M."/>
            <person name="Komatsu T."/>
            <person name="Mizushima-Sugano J."/>
            <person name="Satoh T."/>
            <person name="Shirai Y."/>
            <person name="Takahashi Y."/>
            <person name="Nakagawa K."/>
            <person name="Okumura K."/>
            <person name="Nagase T."/>
            <person name="Nomura N."/>
            <person name="Kikuchi H."/>
            <person name="Masuho Y."/>
            <person name="Yamashita R."/>
            <person name="Nakai K."/>
            <person name="Yada T."/>
            <person name="Nakamura Y."/>
            <person name="Ohara O."/>
            <person name="Isogai T."/>
            <person name="Sugano S."/>
        </authorList>
    </citation>
    <scope>NUCLEOTIDE SEQUENCE [LARGE SCALE MRNA] (ISOFORM 1)</scope>
</reference>
<reference key="4">
    <citation type="journal article" date="2007" name="BMC Genomics">
        <title>The full-ORF clone resource of the German cDNA consortium.</title>
        <authorList>
            <person name="Bechtel S."/>
            <person name="Rosenfelder H."/>
            <person name="Duda A."/>
            <person name="Schmidt C.P."/>
            <person name="Ernst U."/>
            <person name="Wellenreuther R."/>
            <person name="Mehrle A."/>
            <person name="Schuster C."/>
            <person name="Bahr A."/>
            <person name="Bloecker H."/>
            <person name="Heubner D."/>
            <person name="Hoerlein A."/>
            <person name="Michel G."/>
            <person name="Wedler H."/>
            <person name="Koehrer K."/>
            <person name="Ottenwaelder B."/>
            <person name="Poustka A."/>
            <person name="Wiemann S."/>
            <person name="Schupp I."/>
        </authorList>
    </citation>
    <scope>NUCLEOTIDE SEQUENCE [LARGE SCALE MRNA] (ISOFORM 1)</scope>
    <source>
        <tissue>Melanoma</tissue>
    </source>
</reference>
<reference key="5">
    <citation type="journal article" date="2006" name="Nature">
        <title>The finished DNA sequence of human chromosome 12.</title>
        <authorList>
            <person name="Scherer S.E."/>
            <person name="Muzny D.M."/>
            <person name="Buhay C.J."/>
            <person name="Chen R."/>
            <person name="Cree A."/>
            <person name="Ding Y."/>
            <person name="Dugan-Rocha S."/>
            <person name="Gill R."/>
            <person name="Gunaratne P."/>
            <person name="Harris R.A."/>
            <person name="Hawes A.C."/>
            <person name="Hernandez J."/>
            <person name="Hodgson A.V."/>
            <person name="Hume J."/>
            <person name="Jackson A."/>
            <person name="Khan Z.M."/>
            <person name="Kovar-Smith C."/>
            <person name="Lewis L.R."/>
            <person name="Lozado R.J."/>
            <person name="Metzker M.L."/>
            <person name="Milosavljevic A."/>
            <person name="Miner G.R."/>
            <person name="Montgomery K.T."/>
            <person name="Morgan M.B."/>
            <person name="Nazareth L.V."/>
            <person name="Scott G."/>
            <person name="Sodergren E."/>
            <person name="Song X.-Z."/>
            <person name="Steffen D."/>
            <person name="Lovering R.C."/>
            <person name="Wheeler D.A."/>
            <person name="Worley K.C."/>
            <person name="Yuan Y."/>
            <person name="Zhang Z."/>
            <person name="Adams C.Q."/>
            <person name="Ansari-Lari M.A."/>
            <person name="Ayele M."/>
            <person name="Brown M.J."/>
            <person name="Chen G."/>
            <person name="Chen Z."/>
            <person name="Clerc-Blankenburg K.P."/>
            <person name="Davis C."/>
            <person name="Delgado O."/>
            <person name="Dinh H.H."/>
            <person name="Draper H."/>
            <person name="Gonzalez-Garay M.L."/>
            <person name="Havlak P."/>
            <person name="Jackson L.R."/>
            <person name="Jacob L.S."/>
            <person name="Kelly S.H."/>
            <person name="Li L."/>
            <person name="Li Z."/>
            <person name="Liu J."/>
            <person name="Liu W."/>
            <person name="Lu J."/>
            <person name="Maheshwari M."/>
            <person name="Nguyen B.-V."/>
            <person name="Okwuonu G.O."/>
            <person name="Pasternak S."/>
            <person name="Perez L.M."/>
            <person name="Plopper F.J.H."/>
            <person name="Santibanez J."/>
            <person name="Shen H."/>
            <person name="Tabor P.E."/>
            <person name="Verduzco D."/>
            <person name="Waldron L."/>
            <person name="Wang Q."/>
            <person name="Williams G.A."/>
            <person name="Zhang J."/>
            <person name="Zhou J."/>
            <person name="Allen C.C."/>
            <person name="Amin A.G."/>
            <person name="Anyalebechi V."/>
            <person name="Bailey M."/>
            <person name="Barbaria J.A."/>
            <person name="Bimage K.E."/>
            <person name="Bryant N.P."/>
            <person name="Burch P.E."/>
            <person name="Burkett C.E."/>
            <person name="Burrell K.L."/>
            <person name="Calderon E."/>
            <person name="Cardenas V."/>
            <person name="Carter K."/>
            <person name="Casias K."/>
            <person name="Cavazos I."/>
            <person name="Cavazos S.R."/>
            <person name="Ceasar H."/>
            <person name="Chacko J."/>
            <person name="Chan S.N."/>
            <person name="Chavez D."/>
            <person name="Christopoulos C."/>
            <person name="Chu J."/>
            <person name="Cockrell R."/>
            <person name="Cox C.D."/>
            <person name="Dang M."/>
            <person name="Dathorne S.R."/>
            <person name="David R."/>
            <person name="Davis C.M."/>
            <person name="Davy-Carroll L."/>
            <person name="Deshazo D.R."/>
            <person name="Donlin J.E."/>
            <person name="D'Souza L."/>
            <person name="Eaves K.A."/>
            <person name="Egan A."/>
            <person name="Emery-Cohen A.J."/>
            <person name="Escotto M."/>
            <person name="Flagg N."/>
            <person name="Forbes L.D."/>
            <person name="Gabisi A.M."/>
            <person name="Garza M."/>
            <person name="Hamilton C."/>
            <person name="Henderson N."/>
            <person name="Hernandez O."/>
            <person name="Hines S."/>
            <person name="Hogues M.E."/>
            <person name="Huang M."/>
            <person name="Idlebird D.G."/>
            <person name="Johnson R."/>
            <person name="Jolivet A."/>
            <person name="Jones S."/>
            <person name="Kagan R."/>
            <person name="King L.M."/>
            <person name="Leal B."/>
            <person name="Lebow H."/>
            <person name="Lee S."/>
            <person name="LeVan J.M."/>
            <person name="Lewis L.C."/>
            <person name="London P."/>
            <person name="Lorensuhewa L.M."/>
            <person name="Loulseged H."/>
            <person name="Lovett D.A."/>
            <person name="Lucier A."/>
            <person name="Lucier R.L."/>
            <person name="Ma J."/>
            <person name="Madu R.C."/>
            <person name="Mapua P."/>
            <person name="Martindale A.D."/>
            <person name="Martinez E."/>
            <person name="Massey E."/>
            <person name="Mawhiney S."/>
            <person name="Meador M.G."/>
            <person name="Mendez S."/>
            <person name="Mercado C."/>
            <person name="Mercado I.C."/>
            <person name="Merritt C.E."/>
            <person name="Miner Z.L."/>
            <person name="Minja E."/>
            <person name="Mitchell T."/>
            <person name="Mohabbat F."/>
            <person name="Mohabbat K."/>
            <person name="Montgomery B."/>
            <person name="Moore N."/>
            <person name="Morris S."/>
            <person name="Munidasa M."/>
            <person name="Ngo R.N."/>
            <person name="Nguyen N.B."/>
            <person name="Nickerson E."/>
            <person name="Nwaokelemeh O.O."/>
            <person name="Nwokenkwo S."/>
            <person name="Obregon M."/>
            <person name="Oguh M."/>
            <person name="Oragunye N."/>
            <person name="Oviedo R.J."/>
            <person name="Parish B.J."/>
            <person name="Parker D.N."/>
            <person name="Parrish J."/>
            <person name="Parks K.L."/>
            <person name="Paul H.A."/>
            <person name="Payton B.A."/>
            <person name="Perez A."/>
            <person name="Perrin W."/>
            <person name="Pickens A."/>
            <person name="Primus E.L."/>
            <person name="Pu L.-L."/>
            <person name="Puazo M."/>
            <person name="Quiles M.M."/>
            <person name="Quiroz J.B."/>
            <person name="Rabata D."/>
            <person name="Reeves K."/>
            <person name="Ruiz S.J."/>
            <person name="Shao H."/>
            <person name="Sisson I."/>
            <person name="Sonaike T."/>
            <person name="Sorelle R.P."/>
            <person name="Sutton A.E."/>
            <person name="Svatek A.F."/>
            <person name="Svetz L.A."/>
            <person name="Tamerisa K.S."/>
            <person name="Taylor T.R."/>
            <person name="Teague B."/>
            <person name="Thomas N."/>
            <person name="Thorn R.D."/>
            <person name="Trejos Z.Y."/>
            <person name="Trevino B.K."/>
            <person name="Ukegbu O.N."/>
            <person name="Urban J.B."/>
            <person name="Vasquez L.I."/>
            <person name="Vera V.A."/>
            <person name="Villasana D.M."/>
            <person name="Wang L."/>
            <person name="Ward-Moore S."/>
            <person name="Warren J.T."/>
            <person name="Wei X."/>
            <person name="White F."/>
            <person name="Williamson A.L."/>
            <person name="Wleczyk R."/>
            <person name="Wooden H.S."/>
            <person name="Wooden S.H."/>
            <person name="Yen J."/>
            <person name="Yoon L."/>
            <person name="Yoon V."/>
            <person name="Zorrilla S.E."/>
            <person name="Nelson D."/>
            <person name="Kucherlapati R."/>
            <person name="Weinstock G."/>
            <person name="Gibbs R.A."/>
        </authorList>
    </citation>
    <scope>NUCLEOTIDE SEQUENCE [LARGE SCALE GENOMIC DNA]</scope>
</reference>
<reference key="6">
    <citation type="submission" date="2005-07" db="EMBL/GenBank/DDBJ databases">
        <authorList>
            <person name="Mural R.J."/>
            <person name="Istrail S."/>
            <person name="Sutton G.G."/>
            <person name="Florea L."/>
            <person name="Halpern A.L."/>
            <person name="Mobarry C.M."/>
            <person name="Lippert R."/>
            <person name="Walenz B."/>
            <person name="Shatkay H."/>
            <person name="Dew I."/>
            <person name="Miller J.R."/>
            <person name="Flanigan M.J."/>
            <person name="Edwards N.J."/>
            <person name="Bolanos R."/>
            <person name="Fasulo D."/>
            <person name="Halldorsson B.V."/>
            <person name="Hannenhalli S."/>
            <person name="Turner R."/>
            <person name="Yooseph S."/>
            <person name="Lu F."/>
            <person name="Nusskern D.R."/>
            <person name="Shue B.C."/>
            <person name="Zheng X.H."/>
            <person name="Zhong F."/>
            <person name="Delcher A.L."/>
            <person name="Huson D.H."/>
            <person name="Kravitz S.A."/>
            <person name="Mouchard L."/>
            <person name="Reinert K."/>
            <person name="Remington K.A."/>
            <person name="Clark A.G."/>
            <person name="Waterman M.S."/>
            <person name="Eichler E.E."/>
            <person name="Adams M.D."/>
            <person name="Hunkapiller M.W."/>
            <person name="Myers E.W."/>
            <person name="Venter J.C."/>
        </authorList>
    </citation>
    <scope>NUCLEOTIDE SEQUENCE [LARGE SCALE GENOMIC DNA]</scope>
</reference>
<reference key="7">
    <citation type="journal article" date="2004" name="Genome Res.">
        <title>The status, quality, and expansion of the NIH full-length cDNA project: the Mammalian Gene Collection (MGC).</title>
        <authorList>
            <consortium name="The MGC Project Team"/>
        </authorList>
    </citation>
    <scope>NUCLEOTIDE SEQUENCE [LARGE SCALE MRNA] (ISOFORM 1)</scope>
    <source>
        <tissue>Lung</tissue>
    </source>
</reference>
<reference key="8">
    <citation type="journal article" date="2002" name="J. Biol. Chem.">
        <title>Oligomerization, F-actin interaction, and membrane association of the ubiquitous mammalian coronin 3 are mediated by its carboxyl terminus.</title>
        <authorList>
            <person name="Spoerl Z."/>
            <person name="Stumpf M."/>
            <person name="Noegel A.A."/>
            <person name="Hasse A."/>
        </authorList>
    </citation>
    <scope>SUBUNIT</scope>
    <scope>COILED-COIL REGION</scope>
    <scope>WD REPEATS</scope>
    <scope>INTERACTION WITH F-ACTIN</scope>
    <scope>SUBCELLULAR LOCATION</scope>
</reference>
<reference key="9">
    <citation type="journal article" date="2005" name="Nat. Biotechnol.">
        <title>Immunoaffinity profiling of tyrosine phosphorylation in cancer cells.</title>
        <authorList>
            <person name="Rush J."/>
            <person name="Moritz A."/>
            <person name="Lee K.A."/>
            <person name="Guo A."/>
            <person name="Goss V.L."/>
            <person name="Spek E.J."/>
            <person name="Zhang H."/>
            <person name="Zha X.-M."/>
            <person name="Polakiewicz R.D."/>
            <person name="Comb M.J."/>
        </authorList>
    </citation>
    <scope>IDENTIFICATION BY MASS SPECTROMETRY [LARGE SCALE ANALYSIS]</scope>
</reference>
<reference key="10">
    <citation type="journal article" date="2009" name="Science">
        <title>Lysine acetylation targets protein complexes and co-regulates major cellular functions.</title>
        <authorList>
            <person name="Choudhary C."/>
            <person name="Kumar C."/>
            <person name="Gnad F."/>
            <person name="Nielsen M.L."/>
            <person name="Rehman M."/>
            <person name="Walther T.C."/>
            <person name="Olsen J.V."/>
            <person name="Mann M."/>
        </authorList>
    </citation>
    <scope>ACETYLATION [LARGE SCALE ANALYSIS] AT LYS-446</scope>
    <scope>IDENTIFICATION BY MASS SPECTROMETRY [LARGE SCALE ANALYSIS]</scope>
</reference>
<reference key="11">
    <citation type="journal article" date="2011" name="BMC Syst. Biol.">
        <title>Initial characterization of the human central proteome.</title>
        <authorList>
            <person name="Burkard T.R."/>
            <person name="Planyavsky M."/>
            <person name="Kaupe I."/>
            <person name="Breitwieser F.P."/>
            <person name="Buerckstuemmer T."/>
            <person name="Bennett K.L."/>
            <person name="Superti-Furga G."/>
            <person name="Colinge J."/>
        </authorList>
    </citation>
    <scope>IDENTIFICATION BY MASS SPECTROMETRY [LARGE SCALE ANALYSIS]</scope>
</reference>
<reference key="12">
    <citation type="journal article" date="2014" name="J. Proteomics">
        <title>An enzyme assisted RP-RPLC approach for in-depth analysis of human liver phosphoproteome.</title>
        <authorList>
            <person name="Bian Y."/>
            <person name="Song C."/>
            <person name="Cheng K."/>
            <person name="Dong M."/>
            <person name="Wang F."/>
            <person name="Huang J."/>
            <person name="Sun D."/>
            <person name="Wang L."/>
            <person name="Ye M."/>
            <person name="Zou H."/>
        </authorList>
    </citation>
    <scope>IDENTIFICATION BY MASS SPECTROMETRY [LARGE SCALE ANALYSIS]</scope>
    <source>
        <tissue>Liver</tissue>
    </source>
</reference>
<reference key="13">
    <citation type="journal article" date="2015" name="Proteomics">
        <title>N-terminome analysis of the human mitochondrial proteome.</title>
        <authorList>
            <person name="Vaca Jacome A.S."/>
            <person name="Rabilloud T."/>
            <person name="Schaeffer-Reiss C."/>
            <person name="Rompais M."/>
            <person name="Ayoub D."/>
            <person name="Lane L."/>
            <person name="Bairoch A."/>
            <person name="Van Dorsselaer A."/>
            <person name="Carapito C."/>
        </authorList>
    </citation>
    <scope>IDENTIFICATION BY MASS SPECTROMETRY [LARGE SCALE ANALYSIS]</scope>
</reference>
<reference key="14">
    <citation type="journal article" date="2012" name="Biochem. J.">
        <title>Coronin 1C harbours a second actin-binding site that confers co-operative binding to F-actin.</title>
        <authorList>
            <person name="Chan K.T."/>
            <person name="Roadcap D.W."/>
            <person name="Holoweckyj N."/>
            <person name="Bear J.E."/>
        </authorList>
    </citation>
    <scope>ACTIN BINDING</scope>
    <scope>SUBUNIT</scope>
</reference>
<reference key="15">
    <citation type="journal article" date="2014" name="J. Cell Sci.">
        <title>Coronin-1C and RCC2 guide mesenchymal migration by trafficking Rac1 and controlling GEF exposure.</title>
        <authorList>
            <person name="Williamson R.C."/>
            <person name="Cowell C.A."/>
            <person name="Hammond C.L."/>
            <person name="Bergen D.J."/>
            <person name="Roper J.A."/>
            <person name="Feng Y."/>
            <person name="Rendall T.C."/>
            <person name="Race P.R."/>
            <person name="Bass M.D."/>
        </authorList>
    </citation>
    <scope>INTERACTION WITH RCC2 AND RAC1</scope>
    <scope>FUNCTION</scope>
    <scope>SUBCELLULAR LOCATION</scope>
</reference>
<reference key="16">
    <citation type="journal article" date="2015" name="J. Biol. Chem.">
        <title>Coronin-1C Protein and Caveolin Protein Provide Constitutive and Inducible Mechanisms of Rac1 Protein Trafficking.</title>
        <authorList>
            <person name="Williamson R.C."/>
            <person name="Cowell C.A."/>
            <person name="Reville T."/>
            <person name="Roper J.A."/>
            <person name="Rendall T.C."/>
            <person name="Bass M.D."/>
        </authorList>
    </citation>
    <scope>FUNCTION</scope>
    <scope>SUBCELLULAR LOCATION</scope>
</reference>
<reference key="17">
    <citation type="journal article" date="2018" name="Cell">
        <title>A novel class of ER membrane proteins regulates ER-associated endosome fission.</title>
        <authorList>
            <person name="Hoyer M.J."/>
            <person name="Chitwood P.J."/>
            <person name="Ebmeier C.C."/>
            <person name="Striepen J.F."/>
            <person name="Qi R.Z."/>
            <person name="Old W.M."/>
            <person name="Voeltz G.K."/>
        </authorList>
    </citation>
    <scope>FUNCTION</scope>
    <scope>SUBCELLULAR LOCATION</scope>
</reference>
<reference key="18">
    <citation type="journal article" date="2021" name="J. Cell Biol.">
        <title>MICAL2 enhances branched actin network disassembly by oxidizing Arp3B-containing Arp2/3 complexes.</title>
        <authorList>
            <person name="Galloni C."/>
            <person name="Carra D."/>
            <person name="Abella J.V.G."/>
            <person name="Kjaer S."/>
            <person name="Singaravelu P."/>
            <person name="Barry D.J."/>
            <person name="Kogata N."/>
            <person name="Guerin C."/>
            <person name="Blanchoin L."/>
            <person name="Way M."/>
        </authorList>
    </citation>
    <scope>FUNCTION</scope>
    <scope>INTERACTION WITH MICAL2</scope>
</reference>
<comment type="function">
    <text evidence="1 7 8 9 10">Plays a role in directed cell migration by regulating the activation and subcellular location of RAC1 (PubMed:25074804, PubMed:25925950). Increases the presence of activated RAC1 at the leading edge of migrating cells (PubMed:25074804, PubMed:25925950). Required for normal organization of the cytoskeleton, including the actin cytoskeleton, microtubules and the vimentin intermediate filaments (By similarity). Plays a role in endoplasmic reticulum-associated endosome fission: localizes to endosome membrane tubules and promotes recruitment of TMCC1, leading to recruitment of the endoplasmic reticulum to endosome tubules for fission (PubMed:30220460). Endosome membrane fission of early and late endosomes is essential to separate regions destined for lysosomal degradation from carriers to be recycled to the plasma membrane (PubMed:30220460). Required for normal cell proliferation, cell migration, and normal formation of lamellipodia (By similarity). Required for normal distribution of mitochondria within cells (By similarity).</text>
</comment>
<comment type="function">
    <molecule>Isoform 3</molecule>
    <text evidence="5">Involved in myogenic differentiation.</text>
</comment>
<comment type="subunit">
    <text evidence="1 4 5 6 7 10">Binds F-actin (PubMed:12377779, PubMed:22364218). Interacts with RCC2 (PubMed:25074804). Interacts preferentially with nucleotide-free and GDP-bound RAC1 (PubMed:25074804). Interacts with VIM (via head domain) (By similarity). Isoform 1 and isoform 2 appear as homotrimers, while isoform 3 seems to exist as monomers (PubMed:19651142). Interacts with MICAL2; this interaction recruits MICAL2 to the actin filaments (PubMed:34106209).</text>
</comment>
<comment type="interaction">
    <interactant intactId="EBI-351384">
        <id>Q9ULV4</id>
    </interactant>
    <interactant intactId="EBI-351152">
        <id>Q9BR76</id>
        <label>CORO1B</label>
    </interactant>
    <organismsDiffer>false</organismsDiffer>
    <experiments>7</experiments>
</comment>
<comment type="interaction">
    <interactant intactId="EBI-351384">
        <id>Q9ULV4</id>
    </interactant>
    <interactant intactId="EBI-5323863">
        <id>Q5S007</id>
        <label>LRRK2</label>
    </interactant>
    <organismsDiffer>false</organismsDiffer>
    <experiments>3</experiments>
</comment>
<comment type="subcellular location">
    <subcellularLocation>
        <location evidence="4 5 7 8">Cell membrane</location>
        <topology evidence="5 7 8">Peripheral membrane protein</topology>
        <orientation evidence="5 7 8">Cytoplasmic side</orientation>
    </subcellularLocation>
    <subcellularLocation>
        <location evidence="4 5">Cell projection</location>
        <location evidence="4 5">Lamellipodium</location>
    </subcellularLocation>
    <subcellularLocation>
        <location evidence="7">Cell projection</location>
        <location evidence="7">Ruffle membrane</location>
    </subcellularLocation>
    <subcellularLocation>
        <location evidence="3 4 5 7">Cytoplasm</location>
        <location evidence="3 4 5 7">Cytoskeleton</location>
    </subcellularLocation>
    <subcellularLocation>
        <location evidence="3 5">Cytoplasm</location>
        <location evidence="3 5">Cell cortex</location>
    </subcellularLocation>
    <subcellularLocation>
        <location evidence="9">Endosome membrane</location>
    </subcellularLocation>
    <text evidence="3 5 7 9">All isoforms colocalize with the actin cytoskeleton in the cytosol, and especially in the cell cortex (PubMed:10828594, PubMed:19651142, PubMed:25074804). Colocalizes with F-actin at the leading edge of lamellipodia. Partially colocalizes with microtubules and vimentin intermediate filaments (PubMed:10828594, PubMed:19651142, PubMed:25074804). Localizes to endosome membrane tubules/buds (PubMed:30220460).</text>
</comment>
<comment type="subcellular location">
    <molecule>Isoform 3</molecule>
    <subcellularLocation>
        <location evidence="5">Cell membrane</location>
        <location evidence="5">Sarcolemma</location>
    </subcellularLocation>
    <subcellularLocation>
        <location evidence="5">Cytoplasm</location>
        <location evidence="5">Myofibril</location>
        <location evidence="5">Sarcomere</location>
    </subcellularLocation>
    <subcellularLocation>
        <location evidence="5">Synapse</location>
    </subcellularLocation>
    <subcellularLocation>
        <location evidence="5">Cell membrane</location>
        <topology evidence="5">Peripheral membrane protein</topology>
        <orientation evidence="5">Cytoplasmic side</orientation>
    </subcellularLocation>
    <subcellularLocation>
        <location evidence="5">Cytoplasm</location>
        <location evidence="5">Cytoskeleton</location>
    </subcellularLocation>
    <subcellularLocation>
        <location evidence="5">Cytoplasm</location>
        <location evidence="5">Cell cortex</location>
    </subcellularLocation>
    <text evidence="5">Colocalizes with the thin filaments of the sarcomere and with the postsynaptic area and the junctional sarcoplasm of motor end plates. Colocalizes with the actin cytoskeleton in the cytosol, and especially in the cell cortex.</text>
</comment>
<comment type="alternative products">
    <event type="alternative splicing"/>
    <isoform>
        <id>Q9ULV4-1</id>
        <name>1</name>
        <sequence type="displayed"/>
    </isoform>
    <isoform>
        <id>Q9ULV4-2</id>
        <name>2</name>
        <name>CRN2i2</name>
        <sequence type="described" ref="VSP_047727"/>
    </isoform>
    <isoform>
        <id>Q9ULV4-3</id>
        <name>3</name>
        <name>CRN2i3</name>
        <sequence type="described" ref="VSP_047728"/>
    </isoform>
</comment>
<comment type="tissue specificity">
    <text evidence="3">Ubiquitous.</text>
</comment>
<comment type="domain">
    <text>The C-terminal coiled-coil domain is essential for cortical membrane localization and oligomerization.</text>
</comment>
<comment type="miscellaneous">
    <molecule>Isoform 3</molecule>
    <text evidence="14">Exclusively expressed in well-differentiated myoblasts as well as in mature skeletal muscle.</text>
</comment>
<comment type="similarity">
    <text evidence="14">Belongs to the WD repeat coronin family.</text>
</comment>
<comment type="sequence caution" evidence="14">
    <conflict type="erroneous initiation">
        <sequence resource="EMBL-CDS" id="CAB82406"/>
    </conflict>
</comment>
<proteinExistence type="evidence at protein level"/>
<sequence length="474" mass="53249">MRRVVRQSKFRHVFGQAVKNDQCYDDIRVSRVTWDSSFCAVNPRFVAIIIEASGGGAFLVLPLHKTGRIDKSYPTVCGHTGPVLDIDWCPHNDQVIASGSEDCTVMVWQIPENGLTLSLTEPVVILEGHSKRVGIVAWHPTARNVLLSAGCDNAIIIWNVGTGEALINLDDMHSDMIYNVSWNRNGSLICTASKDKKVRVIDPRKQEIVAEKEKAHEGARPMRAIFLADGNVFTTGFSRMSERQLALWNPKNMQEPIALHEMDTSNGVLLPFYDPDTSIIYLCGKGDSSIRYFEITDESPYVHYLNTFSSKEPQRGMGYMPKRGLDVNKCEIARFFKLHERKCEPIIMTVPRKSDLFQDDLYPDTAGPEAALEAEEWFEGKNADPILISLKHGYIPGKNRDLKVVKKNILDSKPTANKKCDLISIPKKTTDTASVQNEAKLDEILKEIKSIKDTICNQDERISKLEQQMAKIAA</sequence>
<dbReference type="EMBL" id="AB030656">
    <property type="protein sequence ID" value="BAA83077.1"/>
    <property type="molecule type" value="mRNA"/>
</dbReference>
<dbReference type="EMBL" id="AM849477">
    <property type="protein sequence ID" value="CAO94662.1"/>
    <property type="molecule type" value="mRNA"/>
</dbReference>
<dbReference type="EMBL" id="AM849478">
    <property type="protein sequence ID" value="CAO94663.1"/>
    <property type="molecule type" value="mRNA"/>
</dbReference>
<dbReference type="EMBL" id="AK096363">
    <property type="protein sequence ID" value="BAG53274.1"/>
    <property type="molecule type" value="mRNA"/>
</dbReference>
<dbReference type="EMBL" id="AL162070">
    <property type="protein sequence ID" value="CAB82406.1"/>
    <property type="status" value="ALT_INIT"/>
    <property type="molecule type" value="mRNA"/>
</dbReference>
<dbReference type="EMBL" id="AC007569">
    <property type="status" value="NOT_ANNOTATED_CDS"/>
    <property type="molecule type" value="Genomic_DNA"/>
</dbReference>
<dbReference type="EMBL" id="CH471054">
    <property type="protein sequence ID" value="EAW97826.1"/>
    <property type="molecule type" value="Genomic_DNA"/>
</dbReference>
<dbReference type="EMBL" id="BC002342">
    <property type="protein sequence ID" value="AAH02342.1"/>
    <property type="molecule type" value="mRNA"/>
</dbReference>
<dbReference type="CCDS" id="CCDS61236.1">
    <molecule id="Q9ULV4-3"/>
</dbReference>
<dbReference type="CCDS" id="CCDS9120.1">
    <molecule id="Q9ULV4-1"/>
</dbReference>
<dbReference type="RefSeq" id="NP_001098707.1">
    <molecule id="Q9ULV4-3"/>
    <property type="nucleotide sequence ID" value="NM_001105237.2"/>
</dbReference>
<dbReference type="RefSeq" id="NP_001263400.1">
    <molecule id="Q9ULV4-1"/>
    <property type="nucleotide sequence ID" value="NM_001276471.2"/>
</dbReference>
<dbReference type="RefSeq" id="NP_055140.1">
    <molecule id="Q9ULV4-1"/>
    <property type="nucleotide sequence ID" value="NM_014325.4"/>
</dbReference>
<dbReference type="RefSeq" id="XP_016874610.1">
    <property type="nucleotide sequence ID" value="XM_017019121.1"/>
</dbReference>
<dbReference type="RefSeq" id="XP_016874611.1">
    <property type="nucleotide sequence ID" value="XM_017019122.1"/>
</dbReference>
<dbReference type="RefSeq" id="XP_016874612.1">
    <property type="nucleotide sequence ID" value="XM_017019123.1"/>
</dbReference>
<dbReference type="PDB" id="7STY">
    <property type="method" value="X-ray"/>
    <property type="resolution" value="2.00 A"/>
    <property type="chains" value="A=1-474"/>
</dbReference>
<dbReference type="PDBsum" id="7STY"/>
<dbReference type="SMR" id="Q9ULV4"/>
<dbReference type="BioGRID" id="117136">
    <property type="interactions" value="365"/>
</dbReference>
<dbReference type="DIP" id="DIP-33138N"/>
<dbReference type="FunCoup" id="Q9ULV4">
    <property type="interactions" value="1484"/>
</dbReference>
<dbReference type="IntAct" id="Q9ULV4">
    <property type="interactions" value="128"/>
</dbReference>
<dbReference type="MINT" id="Q9ULV4"/>
<dbReference type="STRING" id="9606.ENSP00000394496"/>
<dbReference type="GlyConnect" id="1157">
    <property type="glycosylation" value="1 N-Linked glycan (1 site)"/>
</dbReference>
<dbReference type="GlyCosmos" id="Q9ULV4">
    <property type="glycosylation" value="1 site, 1 glycan"/>
</dbReference>
<dbReference type="GlyGen" id="Q9ULV4">
    <property type="glycosylation" value="3 sites, 2 N-linked glycans (2 sites), 1 O-linked glycan (1 site)"/>
</dbReference>
<dbReference type="iPTMnet" id="Q9ULV4"/>
<dbReference type="MetOSite" id="Q9ULV4"/>
<dbReference type="PhosphoSitePlus" id="Q9ULV4"/>
<dbReference type="SwissPalm" id="Q9ULV4"/>
<dbReference type="BioMuta" id="CORO1C"/>
<dbReference type="DMDM" id="12643898"/>
<dbReference type="OGP" id="Q9ULV4"/>
<dbReference type="CPTAC" id="CPTAC-49"/>
<dbReference type="CPTAC" id="CPTAC-50"/>
<dbReference type="jPOST" id="Q9ULV4"/>
<dbReference type="MassIVE" id="Q9ULV4"/>
<dbReference type="PaxDb" id="9606-ENSP00000394496"/>
<dbReference type="PeptideAtlas" id="Q9ULV4"/>
<dbReference type="PRIDE" id="Q9ULV4"/>
<dbReference type="ProteomicsDB" id="1808"/>
<dbReference type="ProteomicsDB" id="85134">
    <molecule id="Q9ULV4-1"/>
</dbReference>
<dbReference type="Pumba" id="Q9ULV4"/>
<dbReference type="Antibodypedia" id="30774">
    <property type="antibodies" value="281 antibodies from 32 providers"/>
</dbReference>
<dbReference type="DNASU" id="23603"/>
<dbReference type="Ensembl" id="ENST00000261401.8">
    <molecule id="Q9ULV4-1"/>
    <property type="protein sequence ID" value="ENSP00000261401.3"/>
    <property type="gene ID" value="ENSG00000110880.11"/>
</dbReference>
<dbReference type="Ensembl" id="ENST00000420959.6">
    <molecule id="Q9ULV4-3"/>
    <property type="protein sequence ID" value="ENSP00000394496.2"/>
    <property type="gene ID" value="ENSG00000110880.11"/>
</dbReference>
<dbReference type="Ensembl" id="ENST00000541050.5">
    <molecule id="Q9ULV4-1"/>
    <property type="protein sequence ID" value="ENSP00000438341.1"/>
    <property type="gene ID" value="ENSG00000110880.11"/>
</dbReference>
<dbReference type="Ensembl" id="ENST00000549772.5">
    <molecule id="Q9ULV4-2"/>
    <property type="protein sequence ID" value="ENSP00000447534.1"/>
    <property type="gene ID" value="ENSG00000110880.11"/>
</dbReference>
<dbReference type="GeneID" id="23603"/>
<dbReference type="KEGG" id="hsa:23603"/>
<dbReference type="MANE-Select" id="ENST00000261401.8">
    <property type="protein sequence ID" value="ENSP00000261401.3"/>
    <property type="RefSeq nucleotide sequence ID" value="NM_014325.4"/>
    <property type="RefSeq protein sequence ID" value="NP_055140.1"/>
</dbReference>
<dbReference type="UCSC" id="uc001tnj.6">
    <molecule id="Q9ULV4-1"/>
    <property type="organism name" value="human"/>
</dbReference>
<dbReference type="AGR" id="HGNC:2254"/>
<dbReference type="CTD" id="23603"/>
<dbReference type="DisGeNET" id="23603"/>
<dbReference type="GeneCards" id="CORO1C"/>
<dbReference type="HGNC" id="HGNC:2254">
    <property type="gene designation" value="CORO1C"/>
</dbReference>
<dbReference type="HPA" id="ENSG00000110880">
    <property type="expression patterns" value="Low tissue specificity"/>
</dbReference>
<dbReference type="MIM" id="605269">
    <property type="type" value="gene"/>
</dbReference>
<dbReference type="neXtProt" id="NX_Q9ULV4"/>
<dbReference type="OpenTargets" id="ENSG00000110880"/>
<dbReference type="PharmGKB" id="PA26770"/>
<dbReference type="VEuPathDB" id="HostDB:ENSG00000110880"/>
<dbReference type="eggNOG" id="KOG0303">
    <property type="taxonomic scope" value="Eukaryota"/>
</dbReference>
<dbReference type="GeneTree" id="ENSGT00940000156488"/>
<dbReference type="HOGENOM" id="CLU_026859_0_1_1"/>
<dbReference type="InParanoid" id="Q9ULV4"/>
<dbReference type="OrthoDB" id="1850764at2759"/>
<dbReference type="PAN-GO" id="Q9ULV4">
    <property type="GO annotations" value="3 GO annotations based on evolutionary models"/>
</dbReference>
<dbReference type="PhylomeDB" id="Q9ULV4"/>
<dbReference type="TreeFam" id="TF314280"/>
<dbReference type="PathwayCommons" id="Q9ULV4"/>
<dbReference type="SignaLink" id="Q9ULV4"/>
<dbReference type="SIGNOR" id="Q9ULV4"/>
<dbReference type="BioGRID-ORCS" id="23603">
    <property type="hits" value="32 hits in 1156 CRISPR screens"/>
</dbReference>
<dbReference type="CD-CODE" id="DEE660B4">
    <property type="entry name" value="Stress granule"/>
</dbReference>
<dbReference type="CD-CODE" id="FB4E32DD">
    <property type="entry name" value="Presynaptic clusters and postsynaptic densities"/>
</dbReference>
<dbReference type="ChiTaRS" id="CORO1C">
    <property type="organism name" value="human"/>
</dbReference>
<dbReference type="GeneWiki" id="CORO1C"/>
<dbReference type="GenomeRNAi" id="23603"/>
<dbReference type="Pharos" id="Q9ULV4">
    <property type="development level" value="Tbio"/>
</dbReference>
<dbReference type="PRO" id="PR:Q9ULV4"/>
<dbReference type="Proteomes" id="UP000005640">
    <property type="component" value="Chromosome 12"/>
</dbReference>
<dbReference type="RNAct" id="Q9ULV4">
    <property type="molecule type" value="protein"/>
</dbReference>
<dbReference type="Bgee" id="ENSG00000110880">
    <property type="expression patterns" value="Expressed in saphenous vein and 210 other cell types or tissues"/>
</dbReference>
<dbReference type="ExpressionAtlas" id="Q9ULV4">
    <property type="expression patterns" value="baseline and differential"/>
</dbReference>
<dbReference type="GO" id="GO:0015629">
    <property type="term" value="C:actin cytoskeleton"/>
    <property type="evidence" value="ECO:0000314"/>
    <property type="project" value="UniProtKB"/>
</dbReference>
<dbReference type="GO" id="GO:0005938">
    <property type="term" value="C:cell cortex"/>
    <property type="evidence" value="ECO:0007669"/>
    <property type="project" value="UniProtKB-SubCell"/>
</dbReference>
<dbReference type="GO" id="GO:0010008">
    <property type="term" value="C:endosome membrane"/>
    <property type="evidence" value="ECO:0000314"/>
    <property type="project" value="UniProtKB"/>
</dbReference>
<dbReference type="GO" id="GO:0016600">
    <property type="term" value="C:flotillin complex"/>
    <property type="evidence" value="ECO:0000250"/>
    <property type="project" value="UniProtKB"/>
</dbReference>
<dbReference type="GO" id="GO:0005925">
    <property type="term" value="C:focal adhesion"/>
    <property type="evidence" value="ECO:0007005"/>
    <property type="project" value="UniProtKB"/>
</dbReference>
<dbReference type="GO" id="GO:0030027">
    <property type="term" value="C:lamellipodium"/>
    <property type="evidence" value="ECO:0000314"/>
    <property type="project" value="UniProtKB"/>
</dbReference>
<dbReference type="GO" id="GO:0016328">
    <property type="term" value="C:lateral plasma membrane"/>
    <property type="evidence" value="ECO:0000314"/>
    <property type="project" value="UniProtKB"/>
</dbReference>
<dbReference type="GO" id="GO:0032587">
    <property type="term" value="C:ruffle membrane"/>
    <property type="evidence" value="ECO:0007669"/>
    <property type="project" value="UniProtKB-SubCell"/>
</dbReference>
<dbReference type="GO" id="GO:0042383">
    <property type="term" value="C:sarcolemma"/>
    <property type="evidence" value="ECO:0007669"/>
    <property type="project" value="UniProtKB-SubCell"/>
</dbReference>
<dbReference type="GO" id="GO:0030017">
    <property type="term" value="C:sarcomere"/>
    <property type="evidence" value="ECO:0007669"/>
    <property type="project" value="UniProtKB-SubCell"/>
</dbReference>
<dbReference type="GO" id="GO:0045202">
    <property type="term" value="C:synapse"/>
    <property type="evidence" value="ECO:0007669"/>
    <property type="project" value="UniProtKB-SubCell"/>
</dbReference>
<dbReference type="GO" id="GO:0051015">
    <property type="term" value="F:actin filament binding"/>
    <property type="evidence" value="ECO:0000315"/>
    <property type="project" value="UniProtKB"/>
</dbReference>
<dbReference type="GO" id="GO:0031267">
    <property type="term" value="F:small GTPase binding"/>
    <property type="evidence" value="ECO:0007669"/>
    <property type="project" value="Ensembl"/>
</dbReference>
<dbReference type="GO" id="GO:0007015">
    <property type="term" value="P:actin filament organization"/>
    <property type="evidence" value="ECO:0000318"/>
    <property type="project" value="GO_Central"/>
</dbReference>
<dbReference type="GO" id="GO:0090630">
    <property type="term" value="P:activation of GTPase activity"/>
    <property type="evidence" value="ECO:0000250"/>
    <property type="project" value="UniProtKB"/>
</dbReference>
<dbReference type="GO" id="GO:0022038">
    <property type="term" value="P:corpus callosum development"/>
    <property type="evidence" value="ECO:0007669"/>
    <property type="project" value="Ensembl"/>
</dbReference>
<dbReference type="GO" id="GO:0016197">
    <property type="term" value="P:endosomal transport"/>
    <property type="evidence" value="ECO:0000314"/>
    <property type="project" value="UniProtKB"/>
</dbReference>
<dbReference type="GO" id="GO:0140285">
    <property type="term" value="P:endosome fission"/>
    <property type="evidence" value="ECO:0000314"/>
    <property type="project" value="UniProtKB"/>
</dbReference>
<dbReference type="GO" id="GO:0097750">
    <property type="term" value="P:endosome membrane tubulation"/>
    <property type="evidence" value="ECO:0000314"/>
    <property type="project" value="UniProtKB"/>
</dbReference>
<dbReference type="GO" id="GO:0045184">
    <property type="term" value="P:establishment of protein localization"/>
    <property type="evidence" value="ECO:0000250"/>
    <property type="project" value="UniProtKB"/>
</dbReference>
<dbReference type="GO" id="GO:0090148">
    <property type="term" value="P:membrane fission"/>
    <property type="evidence" value="ECO:0000314"/>
    <property type="project" value="UniProtKB"/>
</dbReference>
<dbReference type="GO" id="GO:0010633">
    <property type="term" value="P:negative regulation of epithelial cell migration"/>
    <property type="evidence" value="ECO:0000315"/>
    <property type="project" value="UniProtKB"/>
</dbReference>
<dbReference type="GO" id="GO:0051895">
    <property type="term" value="P:negative regulation of focal adhesion assembly"/>
    <property type="evidence" value="ECO:0000315"/>
    <property type="project" value="UniProtKB"/>
</dbReference>
<dbReference type="GO" id="GO:0044387">
    <property type="term" value="P:negative regulation of protein kinase activity by regulation of protein phosphorylation"/>
    <property type="evidence" value="ECO:0000315"/>
    <property type="project" value="UniProtKB"/>
</dbReference>
<dbReference type="GO" id="GO:0001933">
    <property type="term" value="P:negative regulation of protein phosphorylation"/>
    <property type="evidence" value="ECO:0000315"/>
    <property type="project" value="UniProtKB"/>
</dbReference>
<dbReference type="GO" id="GO:1900025">
    <property type="term" value="P:negative regulation of substrate adhesion-dependent cell spreading"/>
    <property type="evidence" value="ECO:0000315"/>
    <property type="project" value="UniProtKB"/>
</dbReference>
<dbReference type="GO" id="GO:0001755">
    <property type="term" value="P:neural crest cell migration"/>
    <property type="evidence" value="ECO:0000315"/>
    <property type="project" value="UniProtKB"/>
</dbReference>
<dbReference type="GO" id="GO:0006909">
    <property type="term" value="P:phagocytosis"/>
    <property type="evidence" value="ECO:0000304"/>
    <property type="project" value="ProtInc"/>
</dbReference>
<dbReference type="GO" id="GO:2000394">
    <property type="term" value="P:positive regulation of lamellipodium morphogenesis"/>
    <property type="evidence" value="ECO:0000315"/>
    <property type="project" value="UniProtKB"/>
</dbReference>
<dbReference type="GO" id="GO:0010632">
    <property type="term" value="P:regulation of epithelial cell migration"/>
    <property type="evidence" value="ECO:0000316"/>
    <property type="project" value="UniProtKB"/>
</dbReference>
<dbReference type="GO" id="GO:0010762">
    <property type="term" value="P:regulation of fibroblast migration"/>
    <property type="evidence" value="ECO:0000250"/>
    <property type="project" value="UniProtKB"/>
</dbReference>
<dbReference type="GO" id="GO:0051893">
    <property type="term" value="P:regulation of focal adhesion assembly"/>
    <property type="evidence" value="ECO:0000316"/>
    <property type="project" value="UniProtKB"/>
</dbReference>
<dbReference type="GO" id="GO:0001932">
    <property type="term" value="P:regulation of protein phosphorylation"/>
    <property type="evidence" value="ECO:0000316"/>
    <property type="project" value="UniProtKB"/>
</dbReference>
<dbReference type="GO" id="GO:1900027">
    <property type="term" value="P:regulation of ruffle assembly"/>
    <property type="evidence" value="ECO:0007669"/>
    <property type="project" value="Ensembl"/>
</dbReference>
<dbReference type="GO" id="GO:1900024">
    <property type="term" value="P:regulation of substrate adhesion-dependent cell spreading"/>
    <property type="evidence" value="ECO:0000316"/>
    <property type="project" value="UniProtKB"/>
</dbReference>
<dbReference type="GO" id="GO:0007165">
    <property type="term" value="P:signal transduction"/>
    <property type="evidence" value="ECO:0000304"/>
    <property type="project" value="ProtInc"/>
</dbReference>
<dbReference type="GO" id="GO:0021591">
    <property type="term" value="P:ventricular system development"/>
    <property type="evidence" value="ECO:0007669"/>
    <property type="project" value="Ensembl"/>
</dbReference>
<dbReference type="FunFam" id="2.130.10.10:FF:000003">
    <property type="entry name" value="Coronin"/>
    <property type="match status" value="1"/>
</dbReference>
<dbReference type="Gene3D" id="2.130.10.10">
    <property type="entry name" value="YVTN repeat-like/Quinoprotein amine dehydrogenase"/>
    <property type="match status" value="1"/>
</dbReference>
<dbReference type="InterPro" id="IPR015505">
    <property type="entry name" value="Coronin"/>
</dbReference>
<dbReference type="InterPro" id="IPR015048">
    <property type="entry name" value="DUF1899"/>
</dbReference>
<dbReference type="InterPro" id="IPR015943">
    <property type="entry name" value="WD40/YVTN_repeat-like_dom_sf"/>
</dbReference>
<dbReference type="InterPro" id="IPR019775">
    <property type="entry name" value="WD40_repeat_CS"/>
</dbReference>
<dbReference type="InterPro" id="IPR036322">
    <property type="entry name" value="WD40_repeat_dom_sf"/>
</dbReference>
<dbReference type="InterPro" id="IPR001680">
    <property type="entry name" value="WD40_rpt"/>
</dbReference>
<dbReference type="PANTHER" id="PTHR10856">
    <property type="entry name" value="CORONIN"/>
    <property type="match status" value="1"/>
</dbReference>
<dbReference type="PANTHER" id="PTHR10856:SF10">
    <property type="entry name" value="CORONIN-1C"/>
    <property type="match status" value="1"/>
</dbReference>
<dbReference type="Pfam" id="PF08953">
    <property type="entry name" value="DUF1899"/>
    <property type="match status" value="1"/>
</dbReference>
<dbReference type="Pfam" id="PF00400">
    <property type="entry name" value="WD40"/>
    <property type="match status" value="3"/>
</dbReference>
<dbReference type="Pfam" id="PF16300">
    <property type="entry name" value="WD40_4"/>
    <property type="match status" value="1"/>
</dbReference>
<dbReference type="SMART" id="SM01166">
    <property type="entry name" value="DUF1899"/>
    <property type="match status" value="1"/>
</dbReference>
<dbReference type="SMART" id="SM01167">
    <property type="entry name" value="DUF1900"/>
    <property type="match status" value="1"/>
</dbReference>
<dbReference type="SMART" id="SM00320">
    <property type="entry name" value="WD40"/>
    <property type="match status" value="3"/>
</dbReference>
<dbReference type="SUPFAM" id="SSF50978">
    <property type="entry name" value="WD40 repeat-like"/>
    <property type="match status" value="1"/>
</dbReference>
<dbReference type="PROSITE" id="PS00678">
    <property type="entry name" value="WD_REPEATS_1"/>
    <property type="match status" value="1"/>
</dbReference>
<dbReference type="PROSITE" id="PS50082">
    <property type="entry name" value="WD_REPEATS_2"/>
    <property type="match status" value="3"/>
</dbReference>
<dbReference type="PROSITE" id="PS50294">
    <property type="entry name" value="WD_REPEATS_REGION"/>
    <property type="match status" value="1"/>
</dbReference>
<protein>
    <recommendedName>
        <fullName>Coronin-1C</fullName>
    </recommendedName>
    <alternativeName>
        <fullName evidence="12">Coronin-3</fullName>
    </alternativeName>
    <alternativeName>
        <fullName>hCRNN4</fullName>
    </alternativeName>
</protein>
<organism>
    <name type="scientific">Homo sapiens</name>
    <name type="common">Human</name>
    <dbReference type="NCBI Taxonomy" id="9606"/>
    <lineage>
        <taxon>Eukaryota</taxon>
        <taxon>Metazoa</taxon>
        <taxon>Chordata</taxon>
        <taxon>Craniata</taxon>
        <taxon>Vertebrata</taxon>
        <taxon>Euteleostomi</taxon>
        <taxon>Mammalia</taxon>
        <taxon>Eutheria</taxon>
        <taxon>Euarchontoglires</taxon>
        <taxon>Primates</taxon>
        <taxon>Haplorrhini</taxon>
        <taxon>Catarrhini</taxon>
        <taxon>Hominidae</taxon>
        <taxon>Homo</taxon>
    </lineage>
</organism>
<name>COR1C_HUMAN</name>
<feature type="chain" id="PRO_0000050926" description="Coronin-1C">
    <location>
        <begin position="1"/>
        <end position="474"/>
    </location>
</feature>
<feature type="repeat" description="WD 1" evidence="2">
    <location>
        <begin position="25"/>
        <end position="70"/>
    </location>
</feature>
<feature type="repeat" description="WD 2" evidence="2 4">
    <location>
        <begin position="78"/>
        <end position="118"/>
    </location>
</feature>
<feature type="repeat" description="WD 3" evidence="2 4">
    <location>
        <begin position="128"/>
        <end position="168"/>
    </location>
</feature>
<feature type="repeat" description="WD 4" evidence="2 4">
    <location>
        <begin position="172"/>
        <end position="202"/>
    </location>
</feature>
<feature type="repeat" description="WD 5" evidence="2 4">
    <location>
        <begin position="215"/>
        <end position="249"/>
    </location>
</feature>
<feature type="repeat" description="WD 6" evidence="2 4">
    <location>
        <begin position="263"/>
        <end position="303"/>
    </location>
</feature>
<feature type="coiled-coil region" evidence="4">
    <location>
        <begin position="436"/>
        <end position="474"/>
    </location>
</feature>
<feature type="modified residue" description="N6-acetyllysine" evidence="16">
    <location>
        <position position="446"/>
    </location>
</feature>
<feature type="splice variant" id="VSP_047727" description="In isoform 2." evidence="13">
    <original>M</original>
    <variation>MRWKDTM</variation>
    <location>
        <position position="1"/>
    </location>
</feature>
<feature type="splice variant" id="VSP_047728" description="In isoform 3." evidence="13">
    <original>M</original>
    <variation>MYGPGSQLGKSGNNSWAKERGCSIACQGSLTSARLHAPSIGERPLSHMRWKDTM</variation>
    <location>
        <position position="1"/>
    </location>
</feature>
<feature type="turn" evidence="17">
    <location>
        <begin position="9"/>
        <end position="12"/>
    </location>
</feature>
<feature type="strand" evidence="17">
    <location>
        <begin position="14"/>
        <end position="17"/>
    </location>
</feature>
<feature type="helix" evidence="17">
    <location>
        <begin position="20"/>
        <end position="22"/>
    </location>
</feature>
<feature type="strand" evidence="17">
    <location>
        <begin position="23"/>
        <end position="26"/>
    </location>
</feature>
<feature type="strand" evidence="17">
    <location>
        <begin position="39"/>
        <end position="41"/>
    </location>
</feature>
<feature type="strand" evidence="17">
    <location>
        <begin position="43"/>
        <end position="50"/>
    </location>
</feature>
<feature type="strand" evidence="17">
    <location>
        <begin position="53"/>
        <end position="62"/>
    </location>
</feature>
<feature type="strand" evidence="17">
    <location>
        <begin position="76"/>
        <end position="81"/>
    </location>
</feature>
<feature type="strand" evidence="17">
    <location>
        <begin position="83"/>
        <end position="89"/>
    </location>
</feature>
<feature type="strand" evidence="17">
    <location>
        <begin position="92"/>
        <end position="100"/>
    </location>
</feature>
<feature type="strand" evidence="17">
    <location>
        <begin position="105"/>
        <end position="109"/>
    </location>
</feature>
<feature type="strand" evidence="17">
    <location>
        <begin position="123"/>
        <end position="126"/>
    </location>
</feature>
<feature type="strand" evidence="17">
    <location>
        <begin position="133"/>
        <end position="138"/>
    </location>
</feature>
<feature type="strand" evidence="17">
    <location>
        <begin position="140"/>
        <end position="143"/>
    </location>
</feature>
<feature type="strand" evidence="17">
    <location>
        <begin position="145"/>
        <end position="150"/>
    </location>
</feature>
<feature type="strand" evidence="17">
    <location>
        <begin position="155"/>
        <end position="159"/>
    </location>
</feature>
<feature type="turn" evidence="17">
    <location>
        <begin position="160"/>
        <end position="163"/>
    </location>
</feature>
<feature type="strand" evidence="17">
    <location>
        <begin position="164"/>
        <end position="169"/>
    </location>
</feature>
<feature type="strand" evidence="17">
    <location>
        <begin position="177"/>
        <end position="182"/>
    </location>
</feature>
<feature type="strand" evidence="17">
    <location>
        <begin position="189"/>
        <end position="193"/>
    </location>
</feature>
<feature type="strand" evidence="17">
    <location>
        <begin position="198"/>
        <end position="202"/>
    </location>
</feature>
<feature type="turn" evidence="17">
    <location>
        <begin position="203"/>
        <end position="206"/>
    </location>
</feature>
<feature type="strand" evidence="17">
    <location>
        <begin position="207"/>
        <end position="212"/>
    </location>
</feature>
<feature type="strand" evidence="17">
    <location>
        <begin position="218"/>
        <end position="220"/>
    </location>
</feature>
<feature type="strand" evidence="17">
    <location>
        <begin position="223"/>
        <end position="226"/>
    </location>
</feature>
<feature type="strand" evidence="17">
    <location>
        <begin position="232"/>
        <end position="237"/>
    </location>
</feature>
<feature type="strand" evidence="17">
    <location>
        <begin position="243"/>
        <end position="248"/>
    </location>
</feature>
<feature type="strand" evidence="17">
    <location>
        <begin position="257"/>
        <end position="263"/>
    </location>
</feature>
<feature type="strand" evidence="17">
    <location>
        <begin position="269"/>
        <end position="274"/>
    </location>
</feature>
<feature type="turn" evidence="17">
    <location>
        <begin position="275"/>
        <end position="278"/>
    </location>
</feature>
<feature type="strand" evidence="17">
    <location>
        <begin position="279"/>
        <end position="284"/>
    </location>
</feature>
<feature type="strand" evidence="17">
    <location>
        <begin position="290"/>
        <end position="295"/>
    </location>
</feature>
<feature type="strand" evidence="17">
    <location>
        <begin position="301"/>
        <end position="308"/>
    </location>
</feature>
<feature type="strand" evidence="17">
    <location>
        <begin position="315"/>
        <end position="319"/>
    </location>
</feature>
<feature type="helix" evidence="17">
    <location>
        <begin position="322"/>
        <end position="324"/>
    </location>
</feature>
<feature type="helix" evidence="17">
    <location>
        <begin position="327"/>
        <end position="329"/>
    </location>
</feature>
<feature type="strand" evidence="17">
    <location>
        <begin position="331"/>
        <end position="338"/>
    </location>
</feature>
<feature type="strand" evidence="17">
    <location>
        <begin position="340"/>
        <end position="349"/>
    </location>
</feature>
<feature type="helix" evidence="17">
    <location>
        <begin position="359"/>
        <end position="361"/>
    </location>
</feature>
<feature type="strand" evidence="17">
    <location>
        <begin position="371"/>
        <end position="373"/>
    </location>
</feature>
<feature type="helix" evidence="17">
    <location>
        <begin position="374"/>
        <end position="378"/>
    </location>
</feature>
<feature type="helix" evidence="17">
    <location>
        <begin position="391"/>
        <end position="393"/>
    </location>
</feature>